<gene>
    <name evidence="1" type="primary">Cramp1</name>
    <name evidence="5" type="synonym">Cramp1l</name>
    <name evidence="1" type="synonym">Hn1l</name>
    <name evidence="5" type="synonym">Kiaa1426</name>
    <name evidence="5" type="synonym">Tce4</name>
</gene>
<dbReference type="EMBL" id="AK147411">
    <property type="status" value="NOT_ANNOTATED_CDS"/>
    <property type="molecule type" value="mRNA"/>
</dbReference>
<dbReference type="EMBL" id="AC154229">
    <property type="status" value="NOT_ANNOTATED_CDS"/>
    <property type="molecule type" value="Genomic_DNA"/>
</dbReference>
<dbReference type="EMBL" id="AK129356">
    <property type="protein sequence ID" value="BAC98166.1"/>
    <property type="molecule type" value="mRNA"/>
</dbReference>
<dbReference type="CCDS" id="CCDS50030.1"/>
<dbReference type="RefSeq" id="NP_001390494.1">
    <property type="nucleotide sequence ID" value="NM_001403565.1"/>
</dbReference>
<dbReference type="RefSeq" id="NP_065633.2">
    <property type="nucleotide sequence ID" value="NM_020608.3"/>
</dbReference>
<dbReference type="RefSeq" id="XP_006524765.1">
    <property type="nucleotide sequence ID" value="XM_006524702.3"/>
</dbReference>
<dbReference type="RefSeq" id="XP_006524766.1">
    <property type="nucleotide sequence ID" value="XM_006524703.5"/>
</dbReference>
<dbReference type="RefSeq" id="XP_017173078.1">
    <property type="nucleotide sequence ID" value="XM_017317589.3"/>
</dbReference>
<dbReference type="BioGRID" id="208268">
    <property type="interactions" value="1"/>
</dbReference>
<dbReference type="FunCoup" id="Q6PG95">
    <property type="interactions" value="3292"/>
</dbReference>
<dbReference type="STRING" id="10090.ENSMUSP00000156906"/>
<dbReference type="GlyGen" id="Q6PG95">
    <property type="glycosylation" value="2 sites"/>
</dbReference>
<dbReference type="iPTMnet" id="Q6PG95"/>
<dbReference type="PhosphoSitePlus" id="Q6PG95"/>
<dbReference type="jPOST" id="Q6PG95"/>
<dbReference type="PaxDb" id="10090-ENSMUSP00000073060"/>
<dbReference type="PeptideAtlas" id="Q6PG95"/>
<dbReference type="ProteomicsDB" id="277896"/>
<dbReference type="Antibodypedia" id="49822">
    <property type="antibodies" value="25 antibodies from 8 providers"/>
</dbReference>
<dbReference type="Ensembl" id="ENSMUST00000073337.8">
    <property type="protein sequence ID" value="ENSMUSP00000073060.7"/>
    <property type="gene ID" value="ENSMUSG00000038002.10"/>
</dbReference>
<dbReference type="Ensembl" id="ENSMUST00000233774.2">
    <property type="protein sequence ID" value="ENSMUSP00000156906.2"/>
    <property type="gene ID" value="ENSMUSG00000038002.10"/>
</dbReference>
<dbReference type="GeneID" id="57354"/>
<dbReference type="KEGG" id="mmu:57354"/>
<dbReference type="UCSC" id="uc008azk.2">
    <property type="organism name" value="mouse"/>
</dbReference>
<dbReference type="AGR" id="MGI:1930190"/>
<dbReference type="CTD" id="57585"/>
<dbReference type="MGI" id="MGI:1930190">
    <property type="gene designation" value="Cramp1"/>
</dbReference>
<dbReference type="VEuPathDB" id="HostDB:ENSMUSG00000038002"/>
<dbReference type="eggNOG" id="KOG4468">
    <property type="taxonomic scope" value="Eukaryota"/>
</dbReference>
<dbReference type="GeneTree" id="ENSGT00390000003337"/>
<dbReference type="HOGENOM" id="CLU_003833_1_0_1"/>
<dbReference type="InParanoid" id="Q6PG95"/>
<dbReference type="OMA" id="YLMMGCP"/>
<dbReference type="OrthoDB" id="515799at2759"/>
<dbReference type="TreeFam" id="TF328521"/>
<dbReference type="BioGRID-ORCS" id="57354">
    <property type="hits" value="15 hits in 80 CRISPR screens"/>
</dbReference>
<dbReference type="ChiTaRS" id="Cramp1l">
    <property type="organism name" value="mouse"/>
</dbReference>
<dbReference type="PRO" id="PR:Q6PG95"/>
<dbReference type="Proteomes" id="UP000000589">
    <property type="component" value="Chromosome 17"/>
</dbReference>
<dbReference type="RNAct" id="Q6PG95">
    <property type="molecule type" value="protein"/>
</dbReference>
<dbReference type="Bgee" id="ENSMUSG00000038002">
    <property type="expression patterns" value="Expressed in rostral migratory stream and 258 other cell types or tissues"/>
</dbReference>
<dbReference type="ExpressionAtlas" id="Q6PG95">
    <property type="expression patterns" value="baseline and differential"/>
</dbReference>
<dbReference type="GO" id="GO:0005634">
    <property type="term" value="C:nucleus"/>
    <property type="evidence" value="ECO:0007669"/>
    <property type="project" value="UniProtKB-SubCell"/>
</dbReference>
<dbReference type="GO" id="GO:0003682">
    <property type="term" value="F:chromatin binding"/>
    <property type="evidence" value="ECO:0007669"/>
    <property type="project" value="InterPro"/>
</dbReference>
<dbReference type="GO" id="GO:0003677">
    <property type="term" value="F:DNA binding"/>
    <property type="evidence" value="ECO:0007669"/>
    <property type="project" value="UniProtKB-KW"/>
</dbReference>
<dbReference type="FunFam" id="1.10.10.60:FF:000439">
    <property type="entry name" value="Cramped chromatin regulator homolog 1"/>
    <property type="match status" value="1"/>
</dbReference>
<dbReference type="Gene3D" id="1.10.10.60">
    <property type="entry name" value="Homeodomain-like"/>
    <property type="match status" value="1"/>
</dbReference>
<dbReference type="InterPro" id="IPR055315">
    <property type="entry name" value="Cramped-like"/>
</dbReference>
<dbReference type="InterPro" id="IPR001005">
    <property type="entry name" value="SANT/Myb"/>
</dbReference>
<dbReference type="InterPro" id="IPR017884">
    <property type="entry name" value="SANT_dom"/>
</dbReference>
<dbReference type="PANTHER" id="PTHR21677">
    <property type="entry name" value="CRAMPED PROTEIN"/>
    <property type="match status" value="1"/>
</dbReference>
<dbReference type="PANTHER" id="PTHR21677:SF1">
    <property type="entry name" value="PROTEIN CRAMPED-LIKE"/>
    <property type="match status" value="1"/>
</dbReference>
<dbReference type="SMART" id="SM00717">
    <property type="entry name" value="SANT"/>
    <property type="match status" value="1"/>
</dbReference>
<dbReference type="PROSITE" id="PS51293">
    <property type="entry name" value="SANT"/>
    <property type="match status" value="1"/>
</dbReference>
<evidence type="ECO:0000250" key="1">
    <source>
        <dbReference type="UniProtKB" id="Q96RY5"/>
    </source>
</evidence>
<evidence type="ECO:0000255" key="2">
    <source>
        <dbReference type="PROSITE-ProRule" id="PRU00624"/>
    </source>
</evidence>
<evidence type="ECO:0000256" key="3">
    <source>
        <dbReference type="SAM" id="MobiDB-lite"/>
    </source>
</evidence>
<evidence type="ECO:0000305" key="4"/>
<evidence type="ECO:0000312" key="5">
    <source>
        <dbReference type="MGI" id="MGI:1930190"/>
    </source>
</evidence>
<keyword id="KW-0238">DNA-binding</keyword>
<keyword id="KW-0539">Nucleus</keyword>
<keyword id="KW-0597">Phosphoprotein</keyword>
<keyword id="KW-1185">Reference proteome</keyword>
<organism>
    <name type="scientific">Mus musculus</name>
    <name type="common">Mouse</name>
    <dbReference type="NCBI Taxonomy" id="10090"/>
    <lineage>
        <taxon>Eukaryota</taxon>
        <taxon>Metazoa</taxon>
        <taxon>Chordata</taxon>
        <taxon>Craniata</taxon>
        <taxon>Vertebrata</taxon>
        <taxon>Euteleostomi</taxon>
        <taxon>Mammalia</taxon>
        <taxon>Eutheria</taxon>
        <taxon>Euarchontoglires</taxon>
        <taxon>Glires</taxon>
        <taxon>Rodentia</taxon>
        <taxon>Myomorpha</taxon>
        <taxon>Muroidea</taxon>
        <taxon>Muridae</taxon>
        <taxon>Murinae</taxon>
        <taxon>Mus</taxon>
        <taxon>Mus</taxon>
    </lineage>
</organism>
<name>CRML_MOUSE</name>
<accession>Q6PG95</accession>
<accession>E9QNA8</accession>
<accession>Q6ZPR3</accession>
<reference key="1">
    <citation type="journal article" date="2005" name="Science">
        <title>The transcriptional landscape of the mammalian genome.</title>
        <authorList>
            <person name="Carninci P."/>
            <person name="Kasukawa T."/>
            <person name="Katayama S."/>
            <person name="Gough J."/>
            <person name="Frith M.C."/>
            <person name="Maeda N."/>
            <person name="Oyama R."/>
            <person name="Ravasi T."/>
            <person name="Lenhard B."/>
            <person name="Wells C."/>
            <person name="Kodzius R."/>
            <person name="Shimokawa K."/>
            <person name="Bajic V.B."/>
            <person name="Brenner S.E."/>
            <person name="Batalov S."/>
            <person name="Forrest A.R."/>
            <person name="Zavolan M."/>
            <person name="Davis M.J."/>
            <person name="Wilming L.G."/>
            <person name="Aidinis V."/>
            <person name="Allen J.E."/>
            <person name="Ambesi-Impiombato A."/>
            <person name="Apweiler R."/>
            <person name="Aturaliya R.N."/>
            <person name="Bailey T.L."/>
            <person name="Bansal M."/>
            <person name="Baxter L."/>
            <person name="Beisel K.W."/>
            <person name="Bersano T."/>
            <person name="Bono H."/>
            <person name="Chalk A.M."/>
            <person name="Chiu K.P."/>
            <person name="Choudhary V."/>
            <person name="Christoffels A."/>
            <person name="Clutterbuck D.R."/>
            <person name="Crowe M.L."/>
            <person name="Dalla E."/>
            <person name="Dalrymple B.P."/>
            <person name="de Bono B."/>
            <person name="Della Gatta G."/>
            <person name="di Bernardo D."/>
            <person name="Down T."/>
            <person name="Engstrom P."/>
            <person name="Fagiolini M."/>
            <person name="Faulkner G."/>
            <person name="Fletcher C.F."/>
            <person name="Fukushima T."/>
            <person name="Furuno M."/>
            <person name="Futaki S."/>
            <person name="Gariboldi M."/>
            <person name="Georgii-Hemming P."/>
            <person name="Gingeras T.R."/>
            <person name="Gojobori T."/>
            <person name="Green R.E."/>
            <person name="Gustincich S."/>
            <person name="Harbers M."/>
            <person name="Hayashi Y."/>
            <person name="Hensch T.K."/>
            <person name="Hirokawa N."/>
            <person name="Hill D."/>
            <person name="Huminiecki L."/>
            <person name="Iacono M."/>
            <person name="Ikeo K."/>
            <person name="Iwama A."/>
            <person name="Ishikawa T."/>
            <person name="Jakt M."/>
            <person name="Kanapin A."/>
            <person name="Katoh M."/>
            <person name="Kawasawa Y."/>
            <person name="Kelso J."/>
            <person name="Kitamura H."/>
            <person name="Kitano H."/>
            <person name="Kollias G."/>
            <person name="Krishnan S.P."/>
            <person name="Kruger A."/>
            <person name="Kummerfeld S.K."/>
            <person name="Kurochkin I.V."/>
            <person name="Lareau L.F."/>
            <person name="Lazarevic D."/>
            <person name="Lipovich L."/>
            <person name="Liu J."/>
            <person name="Liuni S."/>
            <person name="McWilliam S."/>
            <person name="Madan Babu M."/>
            <person name="Madera M."/>
            <person name="Marchionni L."/>
            <person name="Matsuda H."/>
            <person name="Matsuzawa S."/>
            <person name="Miki H."/>
            <person name="Mignone F."/>
            <person name="Miyake S."/>
            <person name="Morris K."/>
            <person name="Mottagui-Tabar S."/>
            <person name="Mulder N."/>
            <person name="Nakano N."/>
            <person name="Nakauchi H."/>
            <person name="Ng P."/>
            <person name="Nilsson R."/>
            <person name="Nishiguchi S."/>
            <person name="Nishikawa S."/>
            <person name="Nori F."/>
            <person name="Ohara O."/>
            <person name="Okazaki Y."/>
            <person name="Orlando V."/>
            <person name="Pang K.C."/>
            <person name="Pavan W.J."/>
            <person name="Pavesi G."/>
            <person name="Pesole G."/>
            <person name="Petrovsky N."/>
            <person name="Piazza S."/>
            <person name="Reed J."/>
            <person name="Reid J.F."/>
            <person name="Ring B.Z."/>
            <person name="Ringwald M."/>
            <person name="Rost B."/>
            <person name="Ruan Y."/>
            <person name="Salzberg S.L."/>
            <person name="Sandelin A."/>
            <person name="Schneider C."/>
            <person name="Schoenbach C."/>
            <person name="Sekiguchi K."/>
            <person name="Semple C.A."/>
            <person name="Seno S."/>
            <person name="Sessa L."/>
            <person name="Sheng Y."/>
            <person name="Shibata Y."/>
            <person name="Shimada H."/>
            <person name="Shimada K."/>
            <person name="Silva D."/>
            <person name="Sinclair B."/>
            <person name="Sperling S."/>
            <person name="Stupka E."/>
            <person name="Sugiura K."/>
            <person name="Sultana R."/>
            <person name="Takenaka Y."/>
            <person name="Taki K."/>
            <person name="Tammoja K."/>
            <person name="Tan S.L."/>
            <person name="Tang S."/>
            <person name="Taylor M.S."/>
            <person name="Tegner J."/>
            <person name="Teichmann S.A."/>
            <person name="Ueda H.R."/>
            <person name="van Nimwegen E."/>
            <person name="Verardo R."/>
            <person name="Wei C.L."/>
            <person name="Yagi K."/>
            <person name="Yamanishi H."/>
            <person name="Zabarovsky E."/>
            <person name="Zhu S."/>
            <person name="Zimmer A."/>
            <person name="Hide W."/>
            <person name="Bult C."/>
            <person name="Grimmond S.M."/>
            <person name="Teasdale R.D."/>
            <person name="Liu E.T."/>
            <person name="Brusic V."/>
            <person name="Quackenbush J."/>
            <person name="Wahlestedt C."/>
            <person name="Mattick J.S."/>
            <person name="Hume D.A."/>
            <person name="Kai C."/>
            <person name="Sasaki D."/>
            <person name="Tomaru Y."/>
            <person name="Fukuda S."/>
            <person name="Kanamori-Katayama M."/>
            <person name="Suzuki M."/>
            <person name="Aoki J."/>
            <person name="Arakawa T."/>
            <person name="Iida J."/>
            <person name="Imamura K."/>
            <person name="Itoh M."/>
            <person name="Kato T."/>
            <person name="Kawaji H."/>
            <person name="Kawagashira N."/>
            <person name="Kawashima T."/>
            <person name="Kojima M."/>
            <person name="Kondo S."/>
            <person name="Konno H."/>
            <person name="Nakano K."/>
            <person name="Ninomiya N."/>
            <person name="Nishio T."/>
            <person name="Okada M."/>
            <person name="Plessy C."/>
            <person name="Shibata K."/>
            <person name="Shiraki T."/>
            <person name="Suzuki S."/>
            <person name="Tagami M."/>
            <person name="Waki K."/>
            <person name="Watahiki A."/>
            <person name="Okamura-Oho Y."/>
            <person name="Suzuki H."/>
            <person name="Kawai J."/>
            <person name="Hayashizaki Y."/>
        </authorList>
    </citation>
    <scope>NUCLEOTIDE SEQUENCE [LARGE SCALE MRNA]</scope>
    <source>
        <strain>C57BL/6J</strain>
        <tissue>Placenta</tissue>
    </source>
</reference>
<reference key="2">
    <citation type="journal article" date="2009" name="PLoS Biol.">
        <title>Lineage-specific biology revealed by a finished genome assembly of the mouse.</title>
        <authorList>
            <person name="Church D.M."/>
            <person name="Goodstadt L."/>
            <person name="Hillier L.W."/>
            <person name="Zody M.C."/>
            <person name="Goldstein S."/>
            <person name="She X."/>
            <person name="Bult C.J."/>
            <person name="Agarwala R."/>
            <person name="Cherry J.L."/>
            <person name="DiCuccio M."/>
            <person name="Hlavina W."/>
            <person name="Kapustin Y."/>
            <person name="Meric P."/>
            <person name="Maglott D."/>
            <person name="Birtle Z."/>
            <person name="Marques A.C."/>
            <person name="Graves T."/>
            <person name="Zhou S."/>
            <person name="Teague B."/>
            <person name="Potamousis K."/>
            <person name="Churas C."/>
            <person name="Place M."/>
            <person name="Herschleb J."/>
            <person name="Runnheim R."/>
            <person name="Forrest D."/>
            <person name="Amos-Landgraf J."/>
            <person name="Schwartz D.C."/>
            <person name="Cheng Z."/>
            <person name="Lindblad-Toh K."/>
            <person name="Eichler E.E."/>
            <person name="Ponting C.P."/>
        </authorList>
    </citation>
    <scope>NUCLEOTIDE SEQUENCE [LARGE SCALE GENOMIC DNA]</scope>
    <source>
        <strain>C57BL/6J</strain>
    </source>
</reference>
<reference key="3">
    <citation type="journal article" date="2003" name="DNA Res.">
        <title>Prediction of the coding sequences of mouse homologues of KIAA gene: III. The complete nucleotide sequences of 500 mouse KIAA-homologous cDNAs identified by screening of terminal sequences of cDNA clones randomly sampled from size-fractionated libraries.</title>
        <authorList>
            <person name="Okazaki N."/>
            <person name="Kikuno R."/>
            <person name="Ohara R."/>
            <person name="Inamoto S."/>
            <person name="Koseki H."/>
            <person name="Hiraoka S."/>
            <person name="Saga Y."/>
            <person name="Nagase T."/>
            <person name="Ohara O."/>
            <person name="Koga H."/>
        </authorList>
    </citation>
    <scope>NUCLEOTIDE SEQUENCE [LARGE SCALE MRNA] OF 574-1285</scope>
    <source>
        <tissue>Embryonic tail</tissue>
    </source>
</reference>
<reference key="4">
    <citation type="journal article" date="2010" name="Cell">
        <title>A tissue-specific atlas of mouse protein phosphorylation and expression.</title>
        <authorList>
            <person name="Huttlin E.L."/>
            <person name="Jedrychowski M.P."/>
            <person name="Elias J.E."/>
            <person name="Goswami T."/>
            <person name="Rad R."/>
            <person name="Beausoleil S.A."/>
            <person name="Villen J."/>
            <person name="Haas W."/>
            <person name="Sowa M.E."/>
            <person name="Gygi S.P."/>
        </authorList>
    </citation>
    <scope>IDENTIFICATION BY MASS SPECTROMETRY [LARGE SCALE ANALYSIS]</scope>
    <source>
        <tissue>Spleen</tissue>
    </source>
</reference>
<comment type="subcellular location">
    <subcellularLocation>
        <location evidence="2">Nucleus</location>
    </subcellularLocation>
</comment>
<comment type="similarity">
    <text evidence="4">Belongs to the cramped family.</text>
</comment>
<comment type="sequence caution" evidence="4">
    <conflict type="frameshift">
        <sequence resource="EMBL" id="AK147411"/>
    </conflict>
</comment>
<sequence>MTVKLGDAGSGEEGLKKLGKRTADEESLDGEGPGGADAADSSSTKRDGQTPRASGAPAPPRGLPTPSPPQGSPQDQHHFLRSSVRPQSKRPRKDAPCALGSGGASGSGPRGKGSDGGASSSGNVSGATPATPAGGSRSSSRNIGSSGPEKEEGKKVRRQWESWSTEDKNTFFEGLYEHGKDFEAIQNNIALKYKKKGKPASMVKNKEQVRHFYYRTWHKITKYIDFDNVFSRGLKKSSQELYGLICYGELRKKIGGCMDDKNATKLNELIQVGATTVRYKGRNLRIKAPMCRALKKLCDPDGLSDEEDQKPVRLPLKVPVELQPRNNHAWARVQSLAQNPRLRMIVELHRKVSSLIEFLKQKWALHEVRIRKTLEERQLQGSSTVQTQEKVALHLFPGENCTLTPLPGVARVVHSKAFCTVHWQEGGRCKQGTKDIHSLPPAQILGIQSGQGIARGQLKCQRSSAEGKGGGRLLPTADASQSSGESSPESAPAEGAAPSLSSPDAPDRPHGLQDSGPHLEKTPVTALAVGRDSPIQESGALPCPCGQPPDLEDELSLLDPFPRYLKSCQDLIIPEQCRRADTRSGREHPPLGSVASPETLTPSSGAVADSAPPGLDPQPGTDHQPDTRLQSDICTKELANASSEESQEKGSPSEHLSSQGQPATRPSKEVPASQLAQQLREEGWSLQTSESLTLAEVYLMMGKPTKLQLEYDWLAVLGPESQAPTAQGQTALSRSSPSALHQQRLLSCLLRLISTEVHPKMAFEANTASTASVRPTQEEQSTTPPGKVVTINSRSPRCSRNPSTLRSNKTFPSASAPCSPGLRNPPRPLLVAGPSSTGSSDSDGGLFAVPTTLPPNSRHGKLFSPSKEAELTFRQHLDSISIQSDFFSPKPKKLRKRHLRKPLVVQRTLLPRPSENQSHNVCSFSILSNSPIAGRGWFRPIQSSLTKAALSRPIVPKVLPSQATSHLPSAIDLAAQSAGIIPGSPLPILDTDGSSGISPLSSEQATTAISGQGDTGPHQNRDPVTAVRGTNDPFISVTRPEQEPMTDGFQGSPALTLPELSKANLQNGLSIPLPSSESSSTRLSPPNVSALLDISLPGPPEDVLSQGEPATQISDSIIEIAISSGQYSEGVPLSPAKLNGSDSSKSLPSPSSSPQPNWIASPTHDPQWYPSDSADSSLSSLFASFISPEKSRKMLPTTVGANSGTSLLGPSLLDGNSRDSFVSRSLADVAEVVDSQLVCMMNENSIDYISRFNDLAQELSITEPGRREVLFDGGGGGNPVGDLSQ</sequence>
<proteinExistence type="evidence at protein level"/>
<feature type="chain" id="PRO_0000264472" description="Protein cramped-like">
    <location>
        <begin position="1"/>
        <end position="1285"/>
    </location>
</feature>
<feature type="domain" description="SANT" evidence="2">
    <location>
        <begin position="158"/>
        <end position="221"/>
    </location>
</feature>
<feature type="region of interest" description="Disordered" evidence="3">
    <location>
        <begin position="1"/>
        <end position="161"/>
    </location>
</feature>
<feature type="region of interest" description="Disordered" evidence="3">
    <location>
        <begin position="456"/>
        <end position="519"/>
    </location>
</feature>
<feature type="region of interest" description="Disordered" evidence="3">
    <location>
        <begin position="579"/>
        <end position="673"/>
    </location>
</feature>
<feature type="region of interest" description="Disordered" evidence="3">
    <location>
        <begin position="766"/>
        <end position="843"/>
    </location>
</feature>
<feature type="region of interest" description="Disordered" evidence="3">
    <location>
        <begin position="994"/>
        <end position="1055"/>
    </location>
</feature>
<feature type="region of interest" description="Disordered" evidence="3">
    <location>
        <begin position="1068"/>
        <end position="1107"/>
    </location>
</feature>
<feature type="region of interest" description="Disordered" evidence="3">
    <location>
        <begin position="1132"/>
        <end position="1172"/>
    </location>
</feature>
<feature type="compositionally biased region" description="Basic and acidic residues" evidence="3">
    <location>
        <begin position="13"/>
        <end position="24"/>
    </location>
</feature>
<feature type="compositionally biased region" description="Pro residues" evidence="3">
    <location>
        <begin position="57"/>
        <end position="71"/>
    </location>
</feature>
<feature type="compositionally biased region" description="Gly residues" evidence="3">
    <location>
        <begin position="100"/>
        <end position="116"/>
    </location>
</feature>
<feature type="compositionally biased region" description="Low complexity" evidence="3">
    <location>
        <begin position="117"/>
        <end position="126"/>
    </location>
</feature>
<feature type="compositionally biased region" description="Low complexity" evidence="3">
    <location>
        <begin position="134"/>
        <end position="147"/>
    </location>
</feature>
<feature type="compositionally biased region" description="Basic and acidic residues" evidence="3">
    <location>
        <begin position="148"/>
        <end position="161"/>
    </location>
</feature>
<feature type="compositionally biased region" description="Low complexity" evidence="3">
    <location>
        <begin position="479"/>
        <end position="503"/>
    </location>
</feature>
<feature type="compositionally biased region" description="Basic and acidic residues" evidence="3">
    <location>
        <begin position="505"/>
        <end position="519"/>
    </location>
</feature>
<feature type="compositionally biased region" description="Basic and acidic residues" evidence="3">
    <location>
        <begin position="579"/>
        <end position="589"/>
    </location>
</feature>
<feature type="compositionally biased region" description="Polar residues" evidence="3">
    <location>
        <begin position="654"/>
        <end position="664"/>
    </location>
</feature>
<feature type="compositionally biased region" description="Polar residues" evidence="3">
    <location>
        <begin position="766"/>
        <end position="784"/>
    </location>
</feature>
<feature type="compositionally biased region" description="Low complexity" evidence="3">
    <location>
        <begin position="792"/>
        <end position="803"/>
    </location>
</feature>
<feature type="compositionally biased region" description="Polar residues" evidence="3">
    <location>
        <begin position="804"/>
        <end position="813"/>
    </location>
</feature>
<feature type="compositionally biased region" description="Low complexity" evidence="3">
    <location>
        <begin position="833"/>
        <end position="843"/>
    </location>
</feature>
<feature type="compositionally biased region" description="Polar residues" evidence="3">
    <location>
        <begin position="994"/>
        <end position="1012"/>
    </location>
</feature>
<feature type="compositionally biased region" description="Low complexity" evidence="3">
    <location>
        <begin position="1069"/>
        <end position="1086"/>
    </location>
</feature>
<feature type="compositionally biased region" description="Low complexity" evidence="3">
    <location>
        <begin position="1141"/>
        <end position="1156"/>
    </location>
</feature>
<feature type="modified residue" description="Phosphoserine" evidence="1">
    <location>
        <position position="304"/>
    </location>
</feature>
<feature type="modified residue" description="Phosphoserine" evidence="1">
    <location>
        <position position="1284"/>
    </location>
</feature>
<feature type="sequence conflict" description="In Ref. 3; BAC98166." evidence="4" ref="3">
    <original>A</original>
    <variation>V</variation>
    <location>
        <position position="608"/>
    </location>
</feature>
<feature type="sequence conflict" description="In Ref. 3; BAC98166." evidence="4" ref="3">
    <original>G</original>
    <variation>D</variation>
    <location>
        <position position="650"/>
    </location>
</feature>
<feature type="sequence conflict" description="In Ref. 3; BAC98166." evidence="4" ref="3">
    <original>A</original>
    <variation>T</variation>
    <location>
        <position position="1174"/>
    </location>
</feature>
<protein>
    <recommendedName>
        <fullName evidence="4">Protein cramped-like</fullName>
    </recommendedName>
    <alternativeName>
        <fullName evidence="1">Cramped chromatin regulator homolog 1</fullName>
    </alternativeName>
    <alternativeName>
        <fullName>Hematological and neurological expressed 1-like protein</fullName>
    </alternativeName>
</protein>